<name>LPPN_MYCBO</name>
<proteinExistence type="inferred from homology"/>
<evidence type="ECO:0000255" key="1">
    <source>
        <dbReference type="PROSITE-ProRule" id="PRU00303"/>
    </source>
</evidence>
<evidence type="ECO:0000256" key="2">
    <source>
        <dbReference type="SAM" id="MobiDB-lite"/>
    </source>
</evidence>
<comment type="subcellular location">
    <subcellularLocation>
        <location evidence="1">Cell membrane</location>
        <topology evidence="1">Lipid-anchor</topology>
    </subcellularLocation>
</comment>
<accession>Q7VEM3</accession>
<accession>A0A1R3Y2V2</accession>
<accession>X2BK82</accession>
<protein>
    <recommendedName>
        <fullName>Putative lipoprotein LppN</fullName>
    </recommendedName>
</protein>
<sequence length="175" mass="18097">MRLPGRHVLYALSAVTMLAACSSNGARGGIASTNMNPTNPPATAETATVSPTPAPQSARTETWINLQVGDCLADLPPADLSRITVTIVDCATAHSAEVYLRAPVAVDAAVVSMANRDCAAGFAPYTGQSVDTSPYSVAYLIDSHQDRTGADLTPSTVICLLQPANGQLLTGSARR</sequence>
<reference key="1">
    <citation type="journal article" date="2003" name="Proc. Natl. Acad. Sci. U.S.A.">
        <title>The complete genome sequence of Mycobacterium bovis.</title>
        <authorList>
            <person name="Garnier T."/>
            <person name="Eiglmeier K."/>
            <person name="Camus J.-C."/>
            <person name="Medina N."/>
            <person name="Mansoor H."/>
            <person name="Pryor M."/>
            <person name="Duthoy S."/>
            <person name="Grondin S."/>
            <person name="Lacroix C."/>
            <person name="Monsempe C."/>
            <person name="Simon S."/>
            <person name="Harris B."/>
            <person name="Atkin R."/>
            <person name="Doggett J."/>
            <person name="Mayes R."/>
            <person name="Keating L."/>
            <person name="Wheeler P.R."/>
            <person name="Parkhill J."/>
            <person name="Barrell B.G."/>
            <person name="Cole S.T."/>
            <person name="Gordon S.V."/>
            <person name="Hewinson R.G."/>
        </authorList>
    </citation>
    <scope>NUCLEOTIDE SEQUENCE [LARGE SCALE GENOMIC DNA]</scope>
    <source>
        <strain>ATCC BAA-935 / AF2122/97</strain>
    </source>
</reference>
<reference key="2">
    <citation type="journal article" date="2017" name="Genome Announc.">
        <title>Updated reference genome sequence and annotation of Mycobacterium bovis AF2122/97.</title>
        <authorList>
            <person name="Malone K.M."/>
            <person name="Farrell D."/>
            <person name="Stuber T.P."/>
            <person name="Schubert O.T."/>
            <person name="Aebersold R."/>
            <person name="Robbe-Austerman S."/>
            <person name="Gordon S.V."/>
        </authorList>
    </citation>
    <scope>NUCLEOTIDE SEQUENCE [LARGE SCALE GENOMIC DNA]</scope>
    <scope>GENOME REANNOTATION</scope>
    <source>
        <strain>ATCC BAA-935 / AF2122/97</strain>
    </source>
</reference>
<feature type="signal peptide" evidence="1">
    <location>
        <begin position="1"/>
        <end position="20"/>
    </location>
</feature>
<feature type="chain" id="PRO_0000018112" description="Putative lipoprotein LppN">
    <location>
        <begin position="21"/>
        <end position="175"/>
    </location>
</feature>
<feature type="region of interest" description="Disordered" evidence="2">
    <location>
        <begin position="31"/>
        <end position="56"/>
    </location>
</feature>
<feature type="compositionally biased region" description="Low complexity" evidence="2">
    <location>
        <begin position="33"/>
        <end position="48"/>
    </location>
</feature>
<feature type="lipid moiety-binding region" description="N-palmitoyl cysteine" evidence="1">
    <location>
        <position position="21"/>
    </location>
</feature>
<feature type="lipid moiety-binding region" description="S-diacylglycerol cysteine" evidence="1">
    <location>
        <position position="21"/>
    </location>
</feature>
<gene>
    <name type="primary">lppN</name>
    <name type="ordered locus">BQ2027_MB2293</name>
</gene>
<dbReference type="EMBL" id="LT708304">
    <property type="protein sequence ID" value="SIU00904.1"/>
    <property type="molecule type" value="Genomic_DNA"/>
</dbReference>
<dbReference type="RefSeq" id="NP_855942.1">
    <property type="nucleotide sequence ID" value="NC_002945.3"/>
</dbReference>
<dbReference type="RefSeq" id="WP_010950684.1">
    <property type="nucleotide sequence ID" value="NC_002945.4"/>
</dbReference>
<dbReference type="KEGG" id="mbo:BQ2027_MB2293"/>
<dbReference type="PATRIC" id="fig|233413.5.peg.2518"/>
<dbReference type="Proteomes" id="UP000001419">
    <property type="component" value="Chromosome"/>
</dbReference>
<dbReference type="GO" id="GO:0005886">
    <property type="term" value="C:plasma membrane"/>
    <property type="evidence" value="ECO:0007669"/>
    <property type="project" value="UniProtKB-SubCell"/>
</dbReference>
<dbReference type="PROSITE" id="PS51257">
    <property type="entry name" value="PROKAR_LIPOPROTEIN"/>
    <property type="match status" value="1"/>
</dbReference>
<organism>
    <name type="scientific">Mycobacterium bovis (strain ATCC BAA-935 / AF2122/97)</name>
    <dbReference type="NCBI Taxonomy" id="233413"/>
    <lineage>
        <taxon>Bacteria</taxon>
        <taxon>Bacillati</taxon>
        <taxon>Actinomycetota</taxon>
        <taxon>Actinomycetes</taxon>
        <taxon>Mycobacteriales</taxon>
        <taxon>Mycobacteriaceae</taxon>
        <taxon>Mycobacterium</taxon>
        <taxon>Mycobacterium tuberculosis complex</taxon>
    </lineage>
</organism>
<keyword id="KW-1003">Cell membrane</keyword>
<keyword id="KW-0449">Lipoprotein</keyword>
<keyword id="KW-0472">Membrane</keyword>
<keyword id="KW-0564">Palmitate</keyword>
<keyword id="KW-1185">Reference proteome</keyword>
<keyword id="KW-0732">Signal</keyword>